<evidence type="ECO:0000255" key="1">
    <source>
        <dbReference type="HAMAP-Rule" id="MF_01970"/>
    </source>
</evidence>
<dbReference type="EC" id="3.7.1.3" evidence="1"/>
<dbReference type="EMBL" id="CP000001">
    <property type="protein sequence ID" value="AAU17771.1"/>
    <property type="molecule type" value="Genomic_DNA"/>
</dbReference>
<dbReference type="RefSeq" id="WP_000276289.1">
    <property type="nucleotide sequence ID" value="NC_006274.1"/>
</dbReference>
<dbReference type="SMR" id="Q63AJ0"/>
<dbReference type="KEGG" id="bcz:BCE33L2488"/>
<dbReference type="PATRIC" id="fig|288681.22.peg.2987"/>
<dbReference type="UniPathway" id="UPA00253">
    <property type="reaction ID" value="UER00329"/>
</dbReference>
<dbReference type="UniPathway" id="UPA00334">
    <property type="reaction ID" value="UER00455"/>
</dbReference>
<dbReference type="Proteomes" id="UP000002612">
    <property type="component" value="Chromosome"/>
</dbReference>
<dbReference type="GO" id="GO:0005737">
    <property type="term" value="C:cytoplasm"/>
    <property type="evidence" value="ECO:0007669"/>
    <property type="project" value="InterPro"/>
</dbReference>
<dbReference type="GO" id="GO:0030429">
    <property type="term" value="F:kynureninase activity"/>
    <property type="evidence" value="ECO:0007669"/>
    <property type="project" value="UniProtKB-UniRule"/>
</dbReference>
<dbReference type="GO" id="GO:0030170">
    <property type="term" value="F:pyridoxal phosphate binding"/>
    <property type="evidence" value="ECO:0007669"/>
    <property type="project" value="UniProtKB-UniRule"/>
</dbReference>
<dbReference type="GO" id="GO:0043420">
    <property type="term" value="P:anthranilate metabolic process"/>
    <property type="evidence" value="ECO:0007669"/>
    <property type="project" value="TreeGrafter"/>
</dbReference>
<dbReference type="GO" id="GO:0097053">
    <property type="term" value="P:L-kynurenine catabolic process"/>
    <property type="evidence" value="ECO:0007669"/>
    <property type="project" value="UniProtKB-UniRule"/>
</dbReference>
<dbReference type="GO" id="GO:0019441">
    <property type="term" value="P:L-tryptophan catabolic process to kynurenine"/>
    <property type="evidence" value="ECO:0007669"/>
    <property type="project" value="TreeGrafter"/>
</dbReference>
<dbReference type="GO" id="GO:0009435">
    <property type="term" value="P:NAD biosynthetic process"/>
    <property type="evidence" value="ECO:0007669"/>
    <property type="project" value="UniProtKB-UniPathway"/>
</dbReference>
<dbReference type="GO" id="GO:0019805">
    <property type="term" value="P:quinolinate biosynthetic process"/>
    <property type="evidence" value="ECO:0007669"/>
    <property type="project" value="UniProtKB-UniRule"/>
</dbReference>
<dbReference type="Gene3D" id="3.90.1150.10">
    <property type="entry name" value="Aspartate Aminotransferase, domain 1"/>
    <property type="match status" value="1"/>
</dbReference>
<dbReference type="Gene3D" id="3.40.640.10">
    <property type="entry name" value="Type I PLP-dependent aspartate aminotransferase-like (Major domain)"/>
    <property type="match status" value="1"/>
</dbReference>
<dbReference type="HAMAP" id="MF_01970">
    <property type="entry name" value="Kynureninase"/>
    <property type="match status" value="1"/>
</dbReference>
<dbReference type="InterPro" id="IPR010111">
    <property type="entry name" value="Kynureninase"/>
</dbReference>
<dbReference type="InterPro" id="IPR015424">
    <property type="entry name" value="PyrdxlP-dep_Trfase"/>
</dbReference>
<dbReference type="InterPro" id="IPR015421">
    <property type="entry name" value="PyrdxlP-dep_Trfase_major"/>
</dbReference>
<dbReference type="InterPro" id="IPR015422">
    <property type="entry name" value="PyrdxlP-dep_Trfase_small"/>
</dbReference>
<dbReference type="NCBIfam" id="TIGR01814">
    <property type="entry name" value="kynureninase"/>
    <property type="match status" value="1"/>
</dbReference>
<dbReference type="PANTHER" id="PTHR14084">
    <property type="entry name" value="KYNURENINASE"/>
    <property type="match status" value="1"/>
</dbReference>
<dbReference type="PANTHER" id="PTHR14084:SF0">
    <property type="entry name" value="KYNURENINASE"/>
    <property type="match status" value="1"/>
</dbReference>
<dbReference type="Pfam" id="PF22580">
    <property type="entry name" value="KYNU_C"/>
    <property type="match status" value="1"/>
</dbReference>
<dbReference type="PIRSF" id="PIRSF038800">
    <property type="entry name" value="KYNU"/>
    <property type="match status" value="1"/>
</dbReference>
<dbReference type="SUPFAM" id="SSF53383">
    <property type="entry name" value="PLP-dependent transferases"/>
    <property type="match status" value="1"/>
</dbReference>
<name>KYNU_BACCZ</name>
<protein>
    <recommendedName>
        <fullName evidence="1">Kynureninase</fullName>
        <ecNumber evidence="1">3.7.1.3</ecNumber>
    </recommendedName>
    <alternativeName>
        <fullName evidence="1">L-kynurenine hydrolase</fullName>
    </alternativeName>
</protein>
<organism>
    <name type="scientific">Bacillus cereus (strain ZK / E33L)</name>
    <dbReference type="NCBI Taxonomy" id="288681"/>
    <lineage>
        <taxon>Bacteria</taxon>
        <taxon>Bacillati</taxon>
        <taxon>Bacillota</taxon>
        <taxon>Bacilli</taxon>
        <taxon>Bacillales</taxon>
        <taxon>Bacillaceae</taxon>
        <taxon>Bacillus</taxon>
        <taxon>Bacillus cereus group</taxon>
    </lineage>
</organism>
<feature type="chain" id="PRO_0000356991" description="Kynureninase">
    <location>
        <begin position="1"/>
        <end position="428"/>
    </location>
</feature>
<feature type="binding site" evidence="1">
    <location>
        <position position="104"/>
    </location>
    <ligand>
        <name>pyridoxal 5'-phosphate</name>
        <dbReference type="ChEBI" id="CHEBI:597326"/>
    </ligand>
</feature>
<feature type="binding site" evidence="1">
    <location>
        <position position="105"/>
    </location>
    <ligand>
        <name>pyridoxal 5'-phosphate</name>
        <dbReference type="ChEBI" id="CHEBI:597326"/>
    </ligand>
</feature>
<feature type="binding site" evidence="1">
    <location>
        <begin position="132"/>
        <end position="135"/>
    </location>
    <ligand>
        <name>pyridoxal 5'-phosphate</name>
        <dbReference type="ChEBI" id="CHEBI:597326"/>
    </ligand>
</feature>
<feature type="binding site" evidence="1">
    <location>
        <position position="213"/>
    </location>
    <ligand>
        <name>pyridoxal 5'-phosphate</name>
        <dbReference type="ChEBI" id="CHEBI:597326"/>
    </ligand>
</feature>
<feature type="binding site" evidence="1">
    <location>
        <position position="216"/>
    </location>
    <ligand>
        <name>pyridoxal 5'-phosphate</name>
        <dbReference type="ChEBI" id="CHEBI:597326"/>
    </ligand>
</feature>
<feature type="binding site" evidence="1">
    <location>
        <position position="238"/>
    </location>
    <ligand>
        <name>pyridoxal 5'-phosphate</name>
        <dbReference type="ChEBI" id="CHEBI:597326"/>
    </ligand>
</feature>
<feature type="binding site" evidence="1">
    <location>
        <position position="267"/>
    </location>
    <ligand>
        <name>pyridoxal 5'-phosphate</name>
        <dbReference type="ChEBI" id="CHEBI:597326"/>
    </ligand>
</feature>
<feature type="binding site" evidence="1">
    <location>
        <position position="295"/>
    </location>
    <ligand>
        <name>pyridoxal 5'-phosphate</name>
        <dbReference type="ChEBI" id="CHEBI:597326"/>
    </ligand>
</feature>
<feature type="modified residue" description="N6-(pyridoxal phosphate)lysine" evidence="1">
    <location>
        <position position="239"/>
    </location>
</feature>
<sequence length="428" mass="48707">MYKEPFQPTYEYALECDKHDELKDFQTEFYKKEGTIYLDGNSLGLLSKRAEKSLLTLLDSWKEYGIDGWTEGEHPWFFLSEKLGELTAPLIGALPEETIVTGSTTTNIHQVIATFYEPKGIRTKILADELTFPSDIYALQSQIRLKGLDPDEHLVRVKSRDGRTLSEDDIIQAMTDDIALILLPSVLYRSGQILDMKRLTAEAHKRGIHIGFDLCHSIGSIPHHFKEWDVDFAIWCNYKYLNAGPGGVAGLYVNKKHFNRPPGLSGWFSSRKDKQFDMEHTLTAADHAGAYQIGTPHVLSTAPLIGSLEIFKDAGIERLREKSLHITRYMLNLIDHELKDFGFTIGNPFEDEKRGGHIYLEHAEAARICKALKANGVIPDFRAPNGVRLAPVALYNTYEEVWQSVMILKKIMKDEEYKQFENKREVVA</sequence>
<keyword id="KW-0378">Hydrolase</keyword>
<keyword id="KW-0662">Pyridine nucleotide biosynthesis</keyword>
<keyword id="KW-0663">Pyridoxal phosphate</keyword>
<proteinExistence type="inferred from homology"/>
<accession>Q63AJ0</accession>
<gene>
    <name evidence="1" type="primary">kynU</name>
    <name type="ordered locus">BCE33L2488</name>
</gene>
<reference key="1">
    <citation type="journal article" date="2006" name="J. Bacteriol.">
        <title>Pathogenomic sequence analysis of Bacillus cereus and Bacillus thuringiensis isolates closely related to Bacillus anthracis.</title>
        <authorList>
            <person name="Han C.S."/>
            <person name="Xie G."/>
            <person name="Challacombe J.F."/>
            <person name="Altherr M.R."/>
            <person name="Bhotika S.S."/>
            <person name="Bruce D."/>
            <person name="Campbell C.S."/>
            <person name="Campbell M.L."/>
            <person name="Chen J."/>
            <person name="Chertkov O."/>
            <person name="Cleland C."/>
            <person name="Dimitrijevic M."/>
            <person name="Doggett N.A."/>
            <person name="Fawcett J.J."/>
            <person name="Glavina T."/>
            <person name="Goodwin L.A."/>
            <person name="Hill K.K."/>
            <person name="Hitchcock P."/>
            <person name="Jackson P.J."/>
            <person name="Keim P."/>
            <person name="Kewalramani A.R."/>
            <person name="Longmire J."/>
            <person name="Lucas S."/>
            <person name="Malfatti S."/>
            <person name="McMurry K."/>
            <person name="Meincke L.J."/>
            <person name="Misra M."/>
            <person name="Moseman B.L."/>
            <person name="Mundt M."/>
            <person name="Munk A.C."/>
            <person name="Okinaka R.T."/>
            <person name="Parson-Quintana B."/>
            <person name="Reilly L.P."/>
            <person name="Richardson P."/>
            <person name="Robinson D.L."/>
            <person name="Rubin E."/>
            <person name="Saunders E."/>
            <person name="Tapia R."/>
            <person name="Tesmer J.G."/>
            <person name="Thayer N."/>
            <person name="Thompson L.S."/>
            <person name="Tice H."/>
            <person name="Ticknor L.O."/>
            <person name="Wills P.L."/>
            <person name="Brettin T.S."/>
            <person name="Gilna P."/>
        </authorList>
    </citation>
    <scope>NUCLEOTIDE SEQUENCE [LARGE SCALE GENOMIC DNA]</scope>
    <source>
        <strain>ZK / E33L</strain>
    </source>
</reference>
<comment type="function">
    <text evidence="1">Catalyzes the cleavage of L-kynurenine (L-Kyn) and L-3-hydroxykynurenine (L-3OHKyn) into anthranilic acid (AA) and 3-hydroxyanthranilic acid (3-OHAA), respectively.</text>
</comment>
<comment type="catalytic activity">
    <reaction evidence="1">
        <text>L-kynurenine + H2O = anthranilate + L-alanine + H(+)</text>
        <dbReference type="Rhea" id="RHEA:16813"/>
        <dbReference type="ChEBI" id="CHEBI:15377"/>
        <dbReference type="ChEBI" id="CHEBI:15378"/>
        <dbReference type="ChEBI" id="CHEBI:16567"/>
        <dbReference type="ChEBI" id="CHEBI:57959"/>
        <dbReference type="ChEBI" id="CHEBI:57972"/>
        <dbReference type="EC" id="3.7.1.3"/>
    </reaction>
</comment>
<comment type="catalytic activity">
    <reaction evidence="1">
        <text>3-hydroxy-L-kynurenine + H2O = 3-hydroxyanthranilate + L-alanine + H(+)</text>
        <dbReference type="Rhea" id="RHEA:25143"/>
        <dbReference type="ChEBI" id="CHEBI:15377"/>
        <dbReference type="ChEBI" id="CHEBI:15378"/>
        <dbReference type="ChEBI" id="CHEBI:36559"/>
        <dbReference type="ChEBI" id="CHEBI:57972"/>
        <dbReference type="ChEBI" id="CHEBI:58125"/>
        <dbReference type="EC" id="3.7.1.3"/>
    </reaction>
</comment>
<comment type="cofactor">
    <cofactor evidence="1">
        <name>pyridoxal 5'-phosphate</name>
        <dbReference type="ChEBI" id="CHEBI:597326"/>
    </cofactor>
</comment>
<comment type="pathway">
    <text evidence="1">Amino-acid degradation; L-kynurenine degradation; L-alanine and anthranilate from L-kynurenine: step 1/1.</text>
</comment>
<comment type="pathway">
    <text evidence="1">Cofactor biosynthesis; NAD(+) biosynthesis; quinolinate from L-kynurenine: step 2/3.</text>
</comment>
<comment type="subunit">
    <text evidence="1">Homodimer.</text>
</comment>
<comment type="similarity">
    <text evidence="1">Belongs to the kynureninase family.</text>
</comment>